<organism>
    <name type="scientific">Cryptococcus neoformans var. neoformans serotype D (strain JEC21 / ATCC MYA-565)</name>
    <name type="common">Filobasidiella neoformans</name>
    <dbReference type="NCBI Taxonomy" id="214684"/>
    <lineage>
        <taxon>Eukaryota</taxon>
        <taxon>Fungi</taxon>
        <taxon>Dikarya</taxon>
        <taxon>Basidiomycota</taxon>
        <taxon>Agaricomycotina</taxon>
        <taxon>Tremellomycetes</taxon>
        <taxon>Tremellales</taxon>
        <taxon>Cryptococcaceae</taxon>
        <taxon>Cryptococcus</taxon>
        <taxon>Cryptococcus neoformans species complex</taxon>
    </lineage>
</organism>
<evidence type="ECO:0000250" key="1"/>
<evidence type="ECO:0000256" key="2">
    <source>
        <dbReference type="SAM" id="MobiDB-lite"/>
    </source>
</evidence>
<evidence type="ECO:0000305" key="3"/>
<sequence length="180" mass="20703">MQALPTILPPPPLPDDSEAPARTPEKHANLVRFQSELEFIQCLAHPQYLHELHIQGYLGKPAFLNYLKYLEYWREPQYVRFIIYPTCLVYLTLLQTELFRSRLGDMGFITELMRVGSRHHATWRVGKPAEDKQSEEKPAVSMAPLDDDEEEDEPERGQETKGKRKKKKSRSGNVGAGQAL</sequence>
<gene>
    <name type="primary">SOH1</name>
    <name type="synonym">MED31</name>
    <name type="ordered locus">CNN00730</name>
</gene>
<feature type="chain" id="PRO_0000305722" description="Mediator of RNA polymerase II transcription subunit 31">
    <location>
        <begin position="1"/>
        <end position="180"/>
    </location>
</feature>
<feature type="region of interest" description="Disordered" evidence="2">
    <location>
        <begin position="1"/>
        <end position="24"/>
    </location>
</feature>
<feature type="region of interest" description="Disordered" evidence="2">
    <location>
        <begin position="123"/>
        <end position="180"/>
    </location>
</feature>
<feature type="compositionally biased region" description="Basic and acidic residues" evidence="2">
    <location>
        <begin position="127"/>
        <end position="138"/>
    </location>
</feature>
<feature type="compositionally biased region" description="Acidic residues" evidence="2">
    <location>
        <begin position="145"/>
        <end position="154"/>
    </location>
</feature>
<proteinExistence type="inferred from homology"/>
<reference key="1">
    <citation type="journal article" date="2005" name="Science">
        <title>The genome of the basidiomycetous yeast and human pathogen Cryptococcus neoformans.</title>
        <authorList>
            <person name="Loftus B.J."/>
            <person name="Fung E."/>
            <person name="Roncaglia P."/>
            <person name="Rowley D."/>
            <person name="Amedeo P."/>
            <person name="Bruno D."/>
            <person name="Vamathevan J."/>
            <person name="Miranda M."/>
            <person name="Anderson I.J."/>
            <person name="Fraser J.A."/>
            <person name="Allen J.E."/>
            <person name="Bosdet I.E."/>
            <person name="Brent M.R."/>
            <person name="Chiu R."/>
            <person name="Doering T.L."/>
            <person name="Donlin M.J."/>
            <person name="D'Souza C.A."/>
            <person name="Fox D.S."/>
            <person name="Grinberg V."/>
            <person name="Fu J."/>
            <person name="Fukushima M."/>
            <person name="Haas B.J."/>
            <person name="Huang J.C."/>
            <person name="Janbon G."/>
            <person name="Jones S.J.M."/>
            <person name="Koo H.L."/>
            <person name="Krzywinski M.I."/>
            <person name="Kwon-Chung K.J."/>
            <person name="Lengeler K.B."/>
            <person name="Maiti R."/>
            <person name="Marra M.A."/>
            <person name="Marra R.E."/>
            <person name="Mathewson C.A."/>
            <person name="Mitchell T.G."/>
            <person name="Pertea M."/>
            <person name="Riggs F.R."/>
            <person name="Salzberg S.L."/>
            <person name="Schein J.E."/>
            <person name="Shvartsbeyn A."/>
            <person name="Shin H."/>
            <person name="Shumway M."/>
            <person name="Specht C.A."/>
            <person name="Suh B.B."/>
            <person name="Tenney A."/>
            <person name="Utterback T.R."/>
            <person name="Wickes B.L."/>
            <person name="Wortman J.R."/>
            <person name="Wye N.H."/>
            <person name="Kronstad J.W."/>
            <person name="Lodge J.K."/>
            <person name="Heitman J."/>
            <person name="Davis R.W."/>
            <person name="Fraser C.M."/>
            <person name="Hyman R.W."/>
        </authorList>
    </citation>
    <scope>NUCLEOTIDE SEQUENCE [LARGE SCALE GENOMIC DNA]</scope>
    <source>
        <strain>JEC21 / ATCC MYA-565</strain>
    </source>
</reference>
<dbReference type="EMBL" id="AE017356">
    <property type="protein sequence ID" value="AAW47221.1"/>
    <property type="molecule type" value="Genomic_DNA"/>
</dbReference>
<dbReference type="RefSeq" id="XP_568738.1">
    <property type="nucleotide sequence ID" value="XM_568738.1"/>
</dbReference>
<dbReference type="SMR" id="P0CS74"/>
<dbReference type="FunCoup" id="P0CS74">
    <property type="interactions" value="166"/>
</dbReference>
<dbReference type="STRING" id="214684.P0CS74"/>
<dbReference type="PaxDb" id="214684-P0CS74"/>
<dbReference type="EnsemblFungi" id="AAW47221">
    <property type="protein sequence ID" value="AAW47221"/>
    <property type="gene ID" value="CNN00730"/>
</dbReference>
<dbReference type="VEuPathDB" id="FungiDB:CNN00730"/>
<dbReference type="eggNOG" id="KOG4086">
    <property type="taxonomic scope" value="Eukaryota"/>
</dbReference>
<dbReference type="HOGENOM" id="CLU_1496138_0_0_1"/>
<dbReference type="InParanoid" id="P0CS74"/>
<dbReference type="OMA" id="AAVEWHK"/>
<dbReference type="OrthoDB" id="10257739at2759"/>
<dbReference type="Proteomes" id="UP000002149">
    <property type="component" value="Chromosome 14"/>
</dbReference>
<dbReference type="GO" id="GO:0070847">
    <property type="term" value="C:core mediator complex"/>
    <property type="evidence" value="ECO:0000318"/>
    <property type="project" value="GO_Central"/>
</dbReference>
<dbReference type="GO" id="GO:0016592">
    <property type="term" value="C:mediator complex"/>
    <property type="evidence" value="ECO:0000318"/>
    <property type="project" value="GO_Central"/>
</dbReference>
<dbReference type="GO" id="GO:0003712">
    <property type="term" value="F:transcription coregulator activity"/>
    <property type="evidence" value="ECO:0007669"/>
    <property type="project" value="InterPro"/>
</dbReference>
<dbReference type="GO" id="GO:0006357">
    <property type="term" value="P:regulation of transcription by RNA polymerase II"/>
    <property type="evidence" value="ECO:0000318"/>
    <property type="project" value="GO_Central"/>
</dbReference>
<dbReference type="FunFam" id="1.10.10.1340:FF:000005">
    <property type="entry name" value="Mediator of RNA polymerase II transcription subunit 31"/>
    <property type="match status" value="1"/>
</dbReference>
<dbReference type="Gene3D" id="1.10.10.1340">
    <property type="entry name" value="Mediator of RNA polymerase II, submodule Med31 (Soh1)"/>
    <property type="match status" value="1"/>
</dbReference>
<dbReference type="InterPro" id="IPR038089">
    <property type="entry name" value="Med31_sf"/>
</dbReference>
<dbReference type="InterPro" id="IPR008831">
    <property type="entry name" value="Mediator_Med31"/>
</dbReference>
<dbReference type="PANTHER" id="PTHR13186">
    <property type="entry name" value="MEDIATOR OF RNA POLYMERASE II TRANSCRIPTION SUBUNIT 31"/>
    <property type="match status" value="1"/>
</dbReference>
<dbReference type="Pfam" id="PF05669">
    <property type="entry name" value="Med31"/>
    <property type="match status" value="1"/>
</dbReference>
<keyword id="KW-0010">Activator</keyword>
<keyword id="KW-0539">Nucleus</keyword>
<keyword id="KW-1185">Reference proteome</keyword>
<keyword id="KW-0804">Transcription</keyword>
<keyword id="KW-0805">Transcription regulation</keyword>
<protein>
    <recommendedName>
        <fullName>Mediator of RNA polymerase II transcription subunit 31</fullName>
    </recommendedName>
    <alternativeName>
        <fullName>Mediator complex subunit 31</fullName>
    </alternativeName>
</protein>
<comment type="function">
    <text evidence="1">Component of the Mediator complex, a coactivator involved in the regulated transcription of nearly all RNA polymerase II-dependent genes. Mediator functions as a bridge to convey information from gene-specific regulatory proteins to the basal RNA polymerase II transcription machinery. Mediator is recruited to promoters by direct interactions with regulatory proteins and serves as a scaffold for the assembly of a functional preinitiation complex with RNA polymerase II and the general transcription factors (By similarity).</text>
</comment>
<comment type="subunit">
    <text evidence="1">Component of the Mediator complex.</text>
</comment>
<comment type="subcellular location">
    <subcellularLocation>
        <location evidence="1">Nucleus</location>
    </subcellularLocation>
</comment>
<comment type="similarity">
    <text evidence="3">Belongs to the Mediator complex subunit 31 family.</text>
</comment>
<name>MED31_CRYNJ</name>
<accession>P0CS74</accession>
<accession>Q55HP9</accession>
<accession>Q5K785</accession>